<keyword id="KW-1185">Reference proteome</keyword>
<protein>
    <recommendedName>
        <fullName>Putative F-box protein At5g50220</fullName>
    </recommendedName>
</protein>
<gene>
    <name type="ordered locus">At5g50220</name>
    <name type="ORF">K6A12.8</name>
</gene>
<proteinExistence type="predicted"/>
<accession>Q9FGS3</accession>
<dbReference type="EMBL" id="AB024031">
    <property type="protein sequence ID" value="BAB09393.1"/>
    <property type="molecule type" value="Genomic_DNA"/>
</dbReference>
<dbReference type="EMBL" id="CP002688">
    <property type="protein sequence ID" value="AED95913.1"/>
    <property type="molecule type" value="Genomic_DNA"/>
</dbReference>
<dbReference type="RefSeq" id="NP_199833.1">
    <property type="nucleotide sequence ID" value="NM_124401.1"/>
</dbReference>
<dbReference type="SMR" id="Q9FGS3"/>
<dbReference type="FunCoup" id="Q9FGS3">
    <property type="interactions" value="3"/>
</dbReference>
<dbReference type="PaxDb" id="3702-AT5G50220.1"/>
<dbReference type="ProteomicsDB" id="222576"/>
<dbReference type="EnsemblPlants" id="AT5G50220.1">
    <property type="protein sequence ID" value="AT5G50220.1"/>
    <property type="gene ID" value="AT5G50220"/>
</dbReference>
<dbReference type="GeneID" id="835087"/>
<dbReference type="Gramene" id="AT5G50220.1">
    <property type="protein sequence ID" value="AT5G50220.1"/>
    <property type="gene ID" value="AT5G50220"/>
</dbReference>
<dbReference type="KEGG" id="ath:AT5G50220"/>
<dbReference type="Araport" id="AT5G50220"/>
<dbReference type="TAIR" id="AT5G50220"/>
<dbReference type="HOGENOM" id="CLU_027176_8_0_1"/>
<dbReference type="InParanoid" id="Q9FGS3"/>
<dbReference type="OMA" id="WVMENAN"/>
<dbReference type="PhylomeDB" id="Q9FGS3"/>
<dbReference type="PRO" id="PR:Q9FGS3"/>
<dbReference type="Proteomes" id="UP000006548">
    <property type="component" value="Chromosome 5"/>
</dbReference>
<dbReference type="ExpressionAtlas" id="Q9FGS3">
    <property type="expression patterns" value="baseline and differential"/>
</dbReference>
<dbReference type="CDD" id="cd22157">
    <property type="entry name" value="F-box_AtFBW1-like"/>
    <property type="match status" value="1"/>
</dbReference>
<dbReference type="Gene3D" id="1.20.1280.50">
    <property type="match status" value="1"/>
</dbReference>
<dbReference type="InterPro" id="IPR013187">
    <property type="entry name" value="F-box-assoc_dom_typ3"/>
</dbReference>
<dbReference type="InterPro" id="IPR017451">
    <property type="entry name" value="F-box-assoc_interact_dom"/>
</dbReference>
<dbReference type="InterPro" id="IPR036047">
    <property type="entry name" value="F-box-like_dom_sf"/>
</dbReference>
<dbReference type="InterPro" id="IPR001810">
    <property type="entry name" value="F-box_dom"/>
</dbReference>
<dbReference type="NCBIfam" id="TIGR01640">
    <property type="entry name" value="F_box_assoc_1"/>
    <property type="match status" value="1"/>
</dbReference>
<dbReference type="PANTHER" id="PTHR31111">
    <property type="entry name" value="BNAA05G37150D PROTEIN-RELATED"/>
    <property type="match status" value="1"/>
</dbReference>
<dbReference type="PANTHER" id="PTHR31111:SF58">
    <property type="entry name" value="F-BOX DOMAIN-CONTAINING PROTEIN"/>
    <property type="match status" value="1"/>
</dbReference>
<dbReference type="Pfam" id="PF00646">
    <property type="entry name" value="F-box"/>
    <property type="match status" value="1"/>
</dbReference>
<dbReference type="Pfam" id="PF08268">
    <property type="entry name" value="FBA_3"/>
    <property type="match status" value="1"/>
</dbReference>
<dbReference type="SMART" id="SM00256">
    <property type="entry name" value="FBOX"/>
    <property type="match status" value="1"/>
</dbReference>
<dbReference type="SUPFAM" id="SSF81383">
    <property type="entry name" value="F-box domain"/>
    <property type="match status" value="1"/>
</dbReference>
<dbReference type="PROSITE" id="PS50181">
    <property type="entry name" value="FBOX"/>
    <property type="match status" value="1"/>
</dbReference>
<organism>
    <name type="scientific">Arabidopsis thaliana</name>
    <name type="common">Mouse-ear cress</name>
    <dbReference type="NCBI Taxonomy" id="3702"/>
    <lineage>
        <taxon>Eukaryota</taxon>
        <taxon>Viridiplantae</taxon>
        <taxon>Streptophyta</taxon>
        <taxon>Embryophyta</taxon>
        <taxon>Tracheophyta</taxon>
        <taxon>Spermatophyta</taxon>
        <taxon>Magnoliopsida</taxon>
        <taxon>eudicotyledons</taxon>
        <taxon>Gunneridae</taxon>
        <taxon>Pentapetalae</taxon>
        <taxon>rosids</taxon>
        <taxon>malvids</taxon>
        <taxon>Brassicales</taxon>
        <taxon>Brassicaceae</taxon>
        <taxon>Camelineae</taxon>
        <taxon>Arabidopsis</taxon>
    </lineage>
</organism>
<reference key="1">
    <citation type="journal article" date="2000" name="DNA Res.">
        <title>Structural analysis of Arabidopsis thaliana chromosome 5. X. Sequence features of the regions of 3,076,755 bp covered by sixty P1 and TAC clones.</title>
        <authorList>
            <person name="Sato S."/>
            <person name="Nakamura Y."/>
            <person name="Kaneko T."/>
            <person name="Katoh T."/>
            <person name="Asamizu E."/>
            <person name="Kotani H."/>
            <person name="Tabata S."/>
        </authorList>
    </citation>
    <scope>NUCLEOTIDE SEQUENCE [LARGE SCALE GENOMIC DNA]</scope>
    <source>
        <strain>cv. Columbia</strain>
    </source>
</reference>
<reference key="2">
    <citation type="journal article" date="2017" name="Plant J.">
        <title>Araport11: a complete reannotation of the Arabidopsis thaliana reference genome.</title>
        <authorList>
            <person name="Cheng C.Y."/>
            <person name="Krishnakumar V."/>
            <person name="Chan A.P."/>
            <person name="Thibaud-Nissen F."/>
            <person name="Schobel S."/>
            <person name="Town C.D."/>
        </authorList>
    </citation>
    <scope>GENOME REANNOTATION</scope>
    <source>
        <strain>cv. Columbia</strain>
    </source>
</reference>
<name>FB287_ARATH</name>
<evidence type="ECO:0000255" key="1">
    <source>
        <dbReference type="PROSITE-ProRule" id="PRU00080"/>
    </source>
</evidence>
<sequence length="357" mass="41564">MKRGSEEIKEETSPLPAKHFQRREVSIAEDIGIPIDLMVEILKKLPAKSLIKFQCVSKQWSSIIGSSRDFIDSIVTRSLSQPSRDILISFSTTLTNSLKQISSSFPLRTLDILTKNQSYTEAAIYNPTTRQSLSLPETTAGHSHVSTSFLGYDPFKNQYKVICLDNYKRRCCHVFTLGDAIRKWRKIQYNFGLYFPLLPPVCIKGTIYYQAKQYGSTYVLLCFDVISEKFDQVEAPKTMMDHRYTLINYQGKLGFMCCQNRVEIWVMKNDEKKQEWSKIFFYEMAGFEKWHIARATPSGEIVFVNRLLLSCQTLYVYYYGPKRNSMRRVEVEGTKYRRKHLVHICPVPDHVENTMRL</sequence>
<feature type="chain" id="PRO_0000283553" description="Putative F-box protein At5g50220">
    <location>
        <begin position="1"/>
        <end position="357"/>
    </location>
</feature>
<feature type="domain" description="F-box" evidence="1">
    <location>
        <begin position="27"/>
        <end position="73"/>
    </location>
</feature>